<comment type="function">
    <text evidence="1">Functions in the biosynthesis of branched-chain amino acids. Catalyzes the dehydration of (2R,3R)-2,3-dihydroxy-3-methylpentanoate (2,3-dihydroxy-3-methylvalerate) into 2-oxo-3-methylpentanoate (2-oxo-3-methylvalerate) and of (2R)-2,3-dihydroxy-3-methylbutanoate (2,3-dihydroxyisovalerate) into 2-oxo-3-methylbutanoate (2-oxoisovalerate), the penultimate precursor to L-isoleucine and L-valine, respectively.</text>
</comment>
<comment type="catalytic activity">
    <reaction evidence="1">
        <text>(2R)-2,3-dihydroxy-3-methylbutanoate = 3-methyl-2-oxobutanoate + H2O</text>
        <dbReference type="Rhea" id="RHEA:24809"/>
        <dbReference type="ChEBI" id="CHEBI:11851"/>
        <dbReference type="ChEBI" id="CHEBI:15377"/>
        <dbReference type="ChEBI" id="CHEBI:49072"/>
        <dbReference type="EC" id="4.2.1.9"/>
    </reaction>
    <physiologicalReaction direction="left-to-right" evidence="1">
        <dbReference type="Rhea" id="RHEA:24810"/>
    </physiologicalReaction>
</comment>
<comment type="catalytic activity">
    <reaction evidence="1">
        <text>(2R,3R)-2,3-dihydroxy-3-methylpentanoate = (S)-3-methyl-2-oxopentanoate + H2O</text>
        <dbReference type="Rhea" id="RHEA:27694"/>
        <dbReference type="ChEBI" id="CHEBI:15377"/>
        <dbReference type="ChEBI" id="CHEBI:35146"/>
        <dbReference type="ChEBI" id="CHEBI:49258"/>
        <dbReference type="EC" id="4.2.1.9"/>
    </reaction>
    <physiologicalReaction direction="left-to-right" evidence="1">
        <dbReference type="Rhea" id="RHEA:27695"/>
    </physiologicalReaction>
</comment>
<comment type="cofactor">
    <cofactor evidence="1">
        <name>[2Fe-2S] cluster</name>
        <dbReference type="ChEBI" id="CHEBI:190135"/>
    </cofactor>
    <text evidence="1">Binds 1 [2Fe-2S] cluster per subunit. This cluster acts as a Lewis acid cofactor.</text>
</comment>
<comment type="cofactor">
    <cofactor evidence="1">
        <name>Mg(2+)</name>
        <dbReference type="ChEBI" id="CHEBI:18420"/>
    </cofactor>
</comment>
<comment type="pathway">
    <text evidence="1">Amino-acid biosynthesis; L-isoleucine biosynthesis; L-isoleucine from 2-oxobutanoate: step 3/4.</text>
</comment>
<comment type="pathway">
    <text evidence="1">Amino-acid biosynthesis; L-valine biosynthesis; L-valine from pyruvate: step 3/4.</text>
</comment>
<comment type="subunit">
    <text evidence="1">Homodimer.</text>
</comment>
<comment type="similarity">
    <text evidence="1">Belongs to the IlvD/Edd family.</text>
</comment>
<protein>
    <recommendedName>
        <fullName evidence="1">Dihydroxy-acid dehydratase</fullName>
        <shortName evidence="1">DAD</shortName>
        <ecNumber evidence="1">4.2.1.9</ecNumber>
    </recommendedName>
</protein>
<dbReference type="EC" id="4.2.1.9" evidence="1"/>
<dbReference type="EMBL" id="CP000687">
    <property type="protein sequence ID" value="ABY68703.1"/>
    <property type="molecule type" value="Genomic_DNA"/>
</dbReference>
<dbReference type="RefSeq" id="WP_005600080.1">
    <property type="nucleotide sequence ID" value="NC_010278.1"/>
</dbReference>
<dbReference type="SMR" id="B0BS03"/>
<dbReference type="KEGG" id="apj:APJL_0097"/>
<dbReference type="HOGENOM" id="CLU_014271_4_2_6"/>
<dbReference type="UniPathway" id="UPA00047">
    <property type="reaction ID" value="UER00057"/>
</dbReference>
<dbReference type="UniPathway" id="UPA00049">
    <property type="reaction ID" value="UER00061"/>
</dbReference>
<dbReference type="Proteomes" id="UP000008547">
    <property type="component" value="Chromosome"/>
</dbReference>
<dbReference type="GO" id="GO:0005829">
    <property type="term" value="C:cytosol"/>
    <property type="evidence" value="ECO:0007669"/>
    <property type="project" value="TreeGrafter"/>
</dbReference>
<dbReference type="GO" id="GO:0051537">
    <property type="term" value="F:2 iron, 2 sulfur cluster binding"/>
    <property type="evidence" value="ECO:0007669"/>
    <property type="project" value="UniProtKB-UniRule"/>
</dbReference>
<dbReference type="GO" id="GO:0004160">
    <property type="term" value="F:dihydroxy-acid dehydratase activity"/>
    <property type="evidence" value="ECO:0007669"/>
    <property type="project" value="UniProtKB-UniRule"/>
</dbReference>
<dbReference type="GO" id="GO:0000287">
    <property type="term" value="F:magnesium ion binding"/>
    <property type="evidence" value="ECO:0007669"/>
    <property type="project" value="UniProtKB-UniRule"/>
</dbReference>
<dbReference type="GO" id="GO:0009097">
    <property type="term" value="P:isoleucine biosynthetic process"/>
    <property type="evidence" value="ECO:0007669"/>
    <property type="project" value="UniProtKB-UniRule"/>
</dbReference>
<dbReference type="GO" id="GO:0009099">
    <property type="term" value="P:L-valine biosynthetic process"/>
    <property type="evidence" value="ECO:0007669"/>
    <property type="project" value="UniProtKB-UniRule"/>
</dbReference>
<dbReference type="FunFam" id="3.50.30.80:FF:000001">
    <property type="entry name" value="Dihydroxy-acid dehydratase"/>
    <property type="match status" value="1"/>
</dbReference>
<dbReference type="Gene3D" id="3.50.30.80">
    <property type="entry name" value="IlvD/EDD C-terminal domain-like"/>
    <property type="match status" value="1"/>
</dbReference>
<dbReference type="HAMAP" id="MF_00012">
    <property type="entry name" value="IlvD"/>
    <property type="match status" value="1"/>
</dbReference>
<dbReference type="InterPro" id="IPR042096">
    <property type="entry name" value="Dihydro-acid_dehy_C"/>
</dbReference>
<dbReference type="InterPro" id="IPR004404">
    <property type="entry name" value="DihydroxyA_deHydtase"/>
</dbReference>
<dbReference type="InterPro" id="IPR020558">
    <property type="entry name" value="DiOHA_6PGluconate_deHydtase_CS"/>
</dbReference>
<dbReference type="InterPro" id="IPR056740">
    <property type="entry name" value="ILV_EDD_C"/>
</dbReference>
<dbReference type="InterPro" id="IPR000581">
    <property type="entry name" value="ILV_EDD_N"/>
</dbReference>
<dbReference type="InterPro" id="IPR037237">
    <property type="entry name" value="IlvD/EDD_N"/>
</dbReference>
<dbReference type="NCBIfam" id="TIGR00110">
    <property type="entry name" value="ilvD"/>
    <property type="match status" value="1"/>
</dbReference>
<dbReference type="NCBIfam" id="NF009103">
    <property type="entry name" value="PRK12448.1"/>
    <property type="match status" value="1"/>
</dbReference>
<dbReference type="PANTHER" id="PTHR43661">
    <property type="entry name" value="D-XYLONATE DEHYDRATASE"/>
    <property type="match status" value="1"/>
</dbReference>
<dbReference type="PANTHER" id="PTHR43661:SF3">
    <property type="entry name" value="D-XYLONATE DEHYDRATASE YAGF-RELATED"/>
    <property type="match status" value="1"/>
</dbReference>
<dbReference type="Pfam" id="PF24877">
    <property type="entry name" value="ILV_EDD_C"/>
    <property type="match status" value="1"/>
</dbReference>
<dbReference type="Pfam" id="PF00920">
    <property type="entry name" value="ILVD_EDD_N"/>
    <property type="match status" value="1"/>
</dbReference>
<dbReference type="SUPFAM" id="SSF143975">
    <property type="entry name" value="IlvD/EDD N-terminal domain-like"/>
    <property type="match status" value="1"/>
</dbReference>
<dbReference type="SUPFAM" id="SSF52016">
    <property type="entry name" value="LeuD/IlvD-like"/>
    <property type="match status" value="1"/>
</dbReference>
<dbReference type="PROSITE" id="PS00886">
    <property type="entry name" value="ILVD_EDD_1"/>
    <property type="match status" value="1"/>
</dbReference>
<dbReference type="PROSITE" id="PS00887">
    <property type="entry name" value="ILVD_EDD_2"/>
    <property type="match status" value="1"/>
</dbReference>
<accession>B0BS03</accession>
<proteinExistence type="inferred from homology"/>
<sequence>MPILRSATSTQGRNMAGARALWRATGMKENDFGKPIIAVVNSFTQFVPGHVHLRDMGKLVAEQIEAAGGVAKEFNTIAVDDGIAMGHGGMLYSLPSRDLIADSVEYMVNAHCADAMVCISNCDKITPGMLMAAMRLNIPAVFVSGGPMEAGKTKLSNQLIKLDLVDAMMKSADKTVCDDDVDAIEKSACPTCGSCSGMFTANSMNCLTEALGLSLPGNGSMLATHADRKELFLTAGRQIVELCKRYYEQDDASVLPRSIATKAAFENAMSLDIAMGGSTNTVLHLLAAAQEAEVDFTMADIDRLSRKVPCLSKVAPNTNKYHMEDVHRAGGIMAILGELERADLLHSDTRTVLGMTIGEQIAKYDITLTKDEAVHKFFRAGPAGIRTTKAFSQDCRWDTVDDDRQNGCIRSKEFAYSQDGGLAMLTGNIALDGCIVKTAGVDESILKFTGDAIVFESQEEAVEGILGGKVRAGHVVIIRYEGPKGGPGMQEMLYPTTYLKSIGLGKECALLTDGRFSGGTSGLSIGHCSPEAASGGTIGLVRDGDKIAIDIPNRSIQLLVSDEELAVRRAEQDAKGWKPANRQREVSMALKMFGHFATSADKGAVRDKTKL</sequence>
<organism>
    <name type="scientific">Actinobacillus pleuropneumoniae serotype 3 (strain JL03)</name>
    <dbReference type="NCBI Taxonomy" id="434271"/>
    <lineage>
        <taxon>Bacteria</taxon>
        <taxon>Pseudomonadati</taxon>
        <taxon>Pseudomonadota</taxon>
        <taxon>Gammaproteobacteria</taxon>
        <taxon>Pasteurellales</taxon>
        <taxon>Pasteurellaceae</taxon>
        <taxon>Actinobacillus</taxon>
    </lineage>
</organism>
<feature type="chain" id="PRO_1000089364" description="Dihydroxy-acid dehydratase">
    <location>
        <begin position="1"/>
        <end position="611"/>
    </location>
</feature>
<feature type="active site" description="Proton acceptor" evidence="1">
    <location>
        <position position="517"/>
    </location>
</feature>
<feature type="binding site" evidence="1">
    <location>
        <position position="81"/>
    </location>
    <ligand>
        <name>Mg(2+)</name>
        <dbReference type="ChEBI" id="CHEBI:18420"/>
    </ligand>
</feature>
<feature type="binding site" evidence="1">
    <location>
        <position position="122"/>
    </location>
    <ligand>
        <name>[2Fe-2S] cluster</name>
        <dbReference type="ChEBI" id="CHEBI:190135"/>
    </ligand>
</feature>
<feature type="binding site" evidence="1">
    <location>
        <position position="123"/>
    </location>
    <ligand>
        <name>Mg(2+)</name>
        <dbReference type="ChEBI" id="CHEBI:18420"/>
    </ligand>
</feature>
<feature type="binding site" description="via carbamate group" evidence="1">
    <location>
        <position position="124"/>
    </location>
    <ligand>
        <name>Mg(2+)</name>
        <dbReference type="ChEBI" id="CHEBI:18420"/>
    </ligand>
</feature>
<feature type="binding site" evidence="1">
    <location>
        <position position="195"/>
    </location>
    <ligand>
        <name>[2Fe-2S] cluster</name>
        <dbReference type="ChEBI" id="CHEBI:190135"/>
    </ligand>
</feature>
<feature type="binding site" evidence="1">
    <location>
        <position position="491"/>
    </location>
    <ligand>
        <name>Mg(2+)</name>
        <dbReference type="ChEBI" id="CHEBI:18420"/>
    </ligand>
</feature>
<feature type="modified residue" description="N6-carboxylysine" evidence="1">
    <location>
        <position position="124"/>
    </location>
</feature>
<name>ILVD_ACTPJ</name>
<gene>
    <name evidence="1" type="primary">ilvD</name>
    <name type="ordered locus">APJL_0097</name>
</gene>
<reference key="1">
    <citation type="journal article" date="2008" name="PLoS ONE">
        <title>Genome biology of Actinobacillus pleuropneumoniae JL03, an isolate of serotype 3 prevalent in China.</title>
        <authorList>
            <person name="Xu Z."/>
            <person name="Zhou Y."/>
            <person name="Li L."/>
            <person name="Zhou R."/>
            <person name="Xiao S."/>
            <person name="Wan Y."/>
            <person name="Zhang S."/>
            <person name="Wang K."/>
            <person name="Li W."/>
            <person name="Li L."/>
            <person name="Jin H."/>
            <person name="Kang M."/>
            <person name="Dalai B."/>
            <person name="Li T."/>
            <person name="Liu L."/>
            <person name="Cheng Y."/>
            <person name="Zhang L."/>
            <person name="Xu T."/>
            <person name="Zheng H."/>
            <person name="Pu S."/>
            <person name="Wang B."/>
            <person name="Gu W."/>
            <person name="Zhang X.L."/>
            <person name="Zhu G.-F."/>
            <person name="Wang S."/>
            <person name="Zhao G.-P."/>
            <person name="Chen H."/>
        </authorList>
    </citation>
    <scope>NUCLEOTIDE SEQUENCE [LARGE SCALE GENOMIC DNA]</scope>
    <source>
        <strain>JL03</strain>
    </source>
</reference>
<keyword id="KW-0001">2Fe-2S</keyword>
<keyword id="KW-0028">Amino-acid biosynthesis</keyword>
<keyword id="KW-0100">Branched-chain amino acid biosynthesis</keyword>
<keyword id="KW-0408">Iron</keyword>
<keyword id="KW-0411">Iron-sulfur</keyword>
<keyword id="KW-0456">Lyase</keyword>
<keyword id="KW-0460">Magnesium</keyword>
<keyword id="KW-0479">Metal-binding</keyword>
<evidence type="ECO:0000255" key="1">
    <source>
        <dbReference type="HAMAP-Rule" id="MF_00012"/>
    </source>
</evidence>